<name>ILVC_PSEA8</name>
<evidence type="ECO:0000255" key="1">
    <source>
        <dbReference type="HAMAP-Rule" id="MF_00435"/>
    </source>
</evidence>
<evidence type="ECO:0000255" key="2">
    <source>
        <dbReference type="PROSITE-ProRule" id="PRU01197"/>
    </source>
</evidence>
<evidence type="ECO:0000255" key="3">
    <source>
        <dbReference type="PROSITE-ProRule" id="PRU01198"/>
    </source>
</evidence>
<dbReference type="EC" id="1.1.1.86" evidence="1"/>
<dbReference type="EMBL" id="FM209186">
    <property type="protein sequence ID" value="CAW29833.1"/>
    <property type="molecule type" value="Genomic_DNA"/>
</dbReference>
<dbReference type="RefSeq" id="WP_003095066.1">
    <property type="nucleotide sequence ID" value="NC_011770.1"/>
</dbReference>
<dbReference type="SMR" id="B7V1A6"/>
<dbReference type="KEGG" id="pag:PLES_50791"/>
<dbReference type="HOGENOM" id="CLU_033821_0_1_6"/>
<dbReference type="UniPathway" id="UPA00047">
    <property type="reaction ID" value="UER00056"/>
</dbReference>
<dbReference type="UniPathway" id="UPA00049">
    <property type="reaction ID" value="UER00060"/>
</dbReference>
<dbReference type="GO" id="GO:0005829">
    <property type="term" value="C:cytosol"/>
    <property type="evidence" value="ECO:0007669"/>
    <property type="project" value="TreeGrafter"/>
</dbReference>
<dbReference type="GO" id="GO:0004455">
    <property type="term" value="F:ketol-acid reductoisomerase activity"/>
    <property type="evidence" value="ECO:0007669"/>
    <property type="project" value="UniProtKB-UniRule"/>
</dbReference>
<dbReference type="GO" id="GO:0000287">
    <property type="term" value="F:magnesium ion binding"/>
    <property type="evidence" value="ECO:0007669"/>
    <property type="project" value="UniProtKB-UniRule"/>
</dbReference>
<dbReference type="GO" id="GO:0050661">
    <property type="term" value="F:NADP binding"/>
    <property type="evidence" value="ECO:0007669"/>
    <property type="project" value="InterPro"/>
</dbReference>
<dbReference type="GO" id="GO:0009097">
    <property type="term" value="P:isoleucine biosynthetic process"/>
    <property type="evidence" value="ECO:0007669"/>
    <property type="project" value="UniProtKB-UniRule"/>
</dbReference>
<dbReference type="GO" id="GO:0009099">
    <property type="term" value="P:L-valine biosynthetic process"/>
    <property type="evidence" value="ECO:0007669"/>
    <property type="project" value="UniProtKB-UniRule"/>
</dbReference>
<dbReference type="FunFam" id="3.40.50.720:FF:000023">
    <property type="entry name" value="Ketol-acid reductoisomerase (NADP(+))"/>
    <property type="match status" value="1"/>
</dbReference>
<dbReference type="Gene3D" id="6.10.240.10">
    <property type="match status" value="1"/>
</dbReference>
<dbReference type="Gene3D" id="3.40.50.720">
    <property type="entry name" value="NAD(P)-binding Rossmann-like Domain"/>
    <property type="match status" value="1"/>
</dbReference>
<dbReference type="HAMAP" id="MF_00435">
    <property type="entry name" value="IlvC"/>
    <property type="match status" value="1"/>
</dbReference>
<dbReference type="InterPro" id="IPR008927">
    <property type="entry name" value="6-PGluconate_DH-like_C_sf"/>
</dbReference>
<dbReference type="InterPro" id="IPR013023">
    <property type="entry name" value="KARI"/>
</dbReference>
<dbReference type="InterPro" id="IPR000506">
    <property type="entry name" value="KARI_C"/>
</dbReference>
<dbReference type="InterPro" id="IPR013116">
    <property type="entry name" value="KARI_N"/>
</dbReference>
<dbReference type="InterPro" id="IPR014359">
    <property type="entry name" value="KARI_prok"/>
</dbReference>
<dbReference type="InterPro" id="IPR036291">
    <property type="entry name" value="NAD(P)-bd_dom_sf"/>
</dbReference>
<dbReference type="NCBIfam" id="TIGR00465">
    <property type="entry name" value="ilvC"/>
    <property type="match status" value="1"/>
</dbReference>
<dbReference type="NCBIfam" id="NF004017">
    <property type="entry name" value="PRK05479.1"/>
    <property type="match status" value="1"/>
</dbReference>
<dbReference type="NCBIfam" id="NF009940">
    <property type="entry name" value="PRK13403.1"/>
    <property type="match status" value="1"/>
</dbReference>
<dbReference type="PANTHER" id="PTHR21371">
    <property type="entry name" value="KETOL-ACID REDUCTOISOMERASE, MITOCHONDRIAL"/>
    <property type="match status" value="1"/>
</dbReference>
<dbReference type="PANTHER" id="PTHR21371:SF1">
    <property type="entry name" value="KETOL-ACID REDUCTOISOMERASE, MITOCHONDRIAL"/>
    <property type="match status" value="1"/>
</dbReference>
<dbReference type="Pfam" id="PF01450">
    <property type="entry name" value="KARI_C"/>
    <property type="match status" value="1"/>
</dbReference>
<dbReference type="Pfam" id="PF07991">
    <property type="entry name" value="KARI_N"/>
    <property type="match status" value="1"/>
</dbReference>
<dbReference type="PIRSF" id="PIRSF000116">
    <property type="entry name" value="IlvC_gammaproteo"/>
    <property type="match status" value="1"/>
</dbReference>
<dbReference type="SUPFAM" id="SSF48179">
    <property type="entry name" value="6-phosphogluconate dehydrogenase C-terminal domain-like"/>
    <property type="match status" value="1"/>
</dbReference>
<dbReference type="SUPFAM" id="SSF51735">
    <property type="entry name" value="NAD(P)-binding Rossmann-fold domains"/>
    <property type="match status" value="1"/>
</dbReference>
<dbReference type="PROSITE" id="PS51851">
    <property type="entry name" value="KARI_C"/>
    <property type="match status" value="1"/>
</dbReference>
<dbReference type="PROSITE" id="PS51850">
    <property type="entry name" value="KARI_N"/>
    <property type="match status" value="1"/>
</dbReference>
<sequence>MRVFYDKDCDLSIIQGKKVAIIGYGSQGHAHACNLKDSGVDVTVGLRSGSATVAKAEAHGLKVADVKTAVAAADVVMILTPDEFQGRLYKEEIEPNLKKGATLAFAHGFSIHYNQVVPRADLDVIMIAPKAPGHTVRSEFVKGGGIPDLIAIYQDASGNAKNVALSYACGVGGGRTGIIETTFKDETETDLFGEQAVLCGGCVELVKAGFETLVEAGYAPEMAYFECLHELKLIVDLMYEGGIANMNYSISNNAEYGEYVTGPEVINAESRAAMRNALKRIQDGEYAKMFITEGAANYPSMTAYRRNNAAHPIEQIGEKLRAMMPWIAANKIVDKSKN</sequence>
<accession>B7V1A6</accession>
<proteinExistence type="inferred from homology"/>
<reference key="1">
    <citation type="journal article" date="2009" name="Genome Res.">
        <title>Newly introduced genomic prophage islands are critical determinants of in vivo competitiveness in the Liverpool epidemic strain of Pseudomonas aeruginosa.</title>
        <authorList>
            <person name="Winstanley C."/>
            <person name="Langille M.G.I."/>
            <person name="Fothergill J.L."/>
            <person name="Kukavica-Ibrulj I."/>
            <person name="Paradis-Bleau C."/>
            <person name="Sanschagrin F."/>
            <person name="Thomson N.R."/>
            <person name="Winsor G.L."/>
            <person name="Quail M.A."/>
            <person name="Lennard N."/>
            <person name="Bignell A."/>
            <person name="Clarke L."/>
            <person name="Seeger K."/>
            <person name="Saunders D."/>
            <person name="Harris D."/>
            <person name="Parkhill J."/>
            <person name="Hancock R.E.W."/>
            <person name="Brinkman F.S.L."/>
            <person name="Levesque R.C."/>
        </authorList>
    </citation>
    <scope>NUCLEOTIDE SEQUENCE [LARGE SCALE GENOMIC DNA]</scope>
    <source>
        <strain>LESB58</strain>
    </source>
</reference>
<comment type="function">
    <text evidence="1">Involved in the biosynthesis of branched-chain amino acids (BCAA). Catalyzes an alkyl-migration followed by a ketol-acid reduction of (S)-2-acetolactate (S2AL) to yield (R)-2,3-dihydroxy-isovalerate. In the isomerase reaction, S2AL is rearranged via a Mg-dependent methyl migration to produce 3-hydroxy-3-methyl-2-ketobutyrate (HMKB). In the reductase reaction, this 2-ketoacid undergoes a metal-dependent reduction by NADPH to yield (R)-2,3-dihydroxy-isovalerate.</text>
</comment>
<comment type="catalytic activity">
    <reaction evidence="1">
        <text>(2R)-2,3-dihydroxy-3-methylbutanoate + NADP(+) = (2S)-2-acetolactate + NADPH + H(+)</text>
        <dbReference type="Rhea" id="RHEA:22068"/>
        <dbReference type="ChEBI" id="CHEBI:15378"/>
        <dbReference type="ChEBI" id="CHEBI:49072"/>
        <dbReference type="ChEBI" id="CHEBI:57783"/>
        <dbReference type="ChEBI" id="CHEBI:58349"/>
        <dbReference type="ChEBI" id="CHEBI:58476"/>
        <dbReference type="EC" id="1.1.1.86"/>
    </reaction>
</comment>
<comment type="catalytic activity">
    <reaction evidence="1">
        <text>(2R,3R)-2,3-dihydroxy-3-methylpentanoate + NADP(+) = (S)-2-ethyl-2-hydroxy-3-oxobutanoate + NADPH + H(+)</text>
        <dbReference type="Rhea" id="RHEA:13493"/>
        <dbReference type="ChEBI" id="CHEBI:15378"/>
        <dbReference type="ChEBI" id="CHEBI:49256"/>
        <dbReference type="ChEBI" id="CHEBI:49258"/>
        <dbReference type="ChEBI" id="CHEBI:57783"/>
        <dbReference type="ChEBI" id="CHEBI:58349"/>
        <dbReference type="EC" id="1.1.1.86"/>
    </reaction>
</comment>
<comment type="cofactor">
    <cofactor evidence="1">
        <name>Mg(2+)</name>
        <dbReference type="ChEBI" id="CHEBI:18420"/>
    </cofactor>
    <text evidence="1">Binds 2 magnesium ions per subunit.</text>
</comment>
<comment type="pathway">
    <text evidence="1">Amino-acid biosynthesis; L-isoleucine biosynthesis; L-isoleucine from 2-oxobutanoate: step 2/4.</text>
</comment>
<comment type="pathway">
    <text evidence="1">Amino-acid biosynthesis; L-valine biosynthesis; L-valine from pyruvate: step 2/4.</text>
</comment>
<comment type="similarity">
    <text evidence="1">Belongs to the ketol-acid reductoisomerase family.</text>
</comment>
<feature type="chain" id="PRO_1000124323" description="Ketol-acid reductoisomerase (NADP(+))">
    <location>
        <begin position="1"/>
        <end position="338"/>
    </location>
</feature>
<feature type="domain" description="KARI N-terminal Rossmann" evidence="2">
    <location>
        <begin position="1"/>
        <end position="181"/>
    </location>
</feature>
<feature type="domain" description="KARI C-terminal knotted" evidence="3">
    <location>
        <begin position="182"/>
        <end position="327"/>
    </location>
</feature>
<feature type="active site" evidence="1">
    <location>
        <position position="107"/>
    </location>
</feature>
<feature type="binding site" evidence="1">
    <location>
        <begin position="24"/>
        <end position="27"/>
    </location>
    <ligand>
        <name>NADP(+)</name>
        <dbReference type="ChEBI" id="CHEBI:58349"/>
    </ligand>
</feature>
<feature type="binding site" evidence="1">
    <location>
        <position position="47"/>
    </location>
    <ligand>
        <name>NADP(+)</name>
        <dbReference type="ChEBI" id="CHEBI:58349"/>
    </ligand>
</feature>
<feature type="binding site" evidence="1">
    <location>
        <position position="50"/>
    </location>
    <ligand>
        <name>NADP(+)</name>
        <dbReference type="ChEBI" id="CHEBI:58349"/>
    </ligand>
</feature>
<feature type="binding site" evidence="1">
    <location>
        <position position="52"/>
    </location>
    <ligand>
        <name>NADP(+)</name>
        <dbReference type="ChEBI" id="CHEBI:58349"/>
    </ligand>
</feature>
<feature type="binding site" evidence="1">
    <location>
        <begin position="82"/>
        <end position="85"/>
    </location>
    <ligand>
        <name>NADP(+)</name>
        <dbReference type="ChEBI" id="CHEBI:58349"/>
    </ligand>
</feature>
<feature type="binding site" evidence="1">
    <location>
        <position position="133"/>
    </location>
    <ligand>
        <name>NADP(+)</name>
        <dbReference type="ChEBI" id="CHEBI:58349"/>
    </ligand>
</feature>
<feature type="binding site" evidence="1">
    <location>
        <position position="190"/>
    </location>
    <ligand>
        <name>Mg(2+)</name>
        <dbReference type="ChEBI" id="CHEBI:18420"/>
        <label>1</label>
    </ligand>
</feature>
<feature type="binding site" evidence="1">
    <location>
        <position position="190"/>
    </location>
    <ligand>
        <name>Mg(2+)</name>
        <dbReference type="ChEBI" id="CHEBI:18420"/>
        <label>2</label>
    </ligand>
</feature>
<feature type="binding site" evidence="1">
    <location>
        <position position="194"/>
    </location>
    <ligand>
        <name>Mg(2+)</name>
        <dbReference type="ChEBI" id="CHEBI:18420"/>
        <label>1</label>
    </ligand>
</feature>
<feature type="binding site" evidence="1">
    <location>
        <position position="226"/>
    </location>
    <ligand>
        <name>Mg(2+)</name>
        <dbReference type="ChEBI" id="CHEBI:18420"/>
        <label>2</label>
    </ligand>
</feature>
<feature type="binding site" evidence="1">
    <location>
        <position position="230"/>
    </location>
    <ligand>
        <name>Mg(2+)</name>
        <dbReference type="ChEBI" id="CHEBI:18420"/>
        <label>2</label>
    </ligand>
</feature>
<feature type="binding site" evidence="1">
    <location>
        <position position="251"/>
    </location>
    <ligand>
        <name>substrate</name>
    </ligand>
</feature>
<organism>
    <name type="scientific">Pseudomonas aeruginosa (strain LESB58)</name>
    <dbReference type="NCBI Taxonomy" id="557722"/>
    <lineage>
        <taxon>Bacteria</taxon>
        <taxon>Pseudomonadati</taxon>
        <taxon>Pseudomonadota</taxon>
        <taxon>Gammaproteobacteria</taxon>
        <taxon>Pseudomonadales</taxon>
        <taxon>Pseudomonadaceae</taxon>
        <taxon>Pseudomonas</taxon>
    </lineage>
</organism>
<gene>
    <name evidence="1" type="primary">ilvC</name>
    <name type="ordered locus">PLES_50791</name>
</gene>
<keyword id="KW-0028">Amino-acid biosynthesis</keyword>
<keyword id="KW-0100">Branched-chain amino acid biosynthesis</keyword>
<keyword id="KW-0460">Magnesium</keyword>
<keyword id="KW-0479">Metal-binding</keyword>
<keyword id="KW-0521">NADP</keyword>
<keyword id="KW-0560">Oxidoreductase</keyword>
<protein>
    <recommendedName>
        <fullName evidence="1">Ketol-acid reductoisomerase (NADP(+))</fullName>
        <shortName evidence="1">KARI</shortName>
        <ecNumber evidence="1">1.1.1.86</ecNumber>
    </recommendedName>
    <alternativeName>
        <fullName evidence="1">Acetohydroxy-acid isomeroreductase</fullName>
        <shortName evidence="1">AHIR</shortName>
    </alternativeName>
    <alternativeName>
        <fullName evidence="1">Alpha-keto-beta-hydroxylacyl reductoisomerase</fullName>
    </alternativeName>
    <alternativeName>
        <fullName evidence="1">Ketol-acid reductoisomerase type 1</fullName>
    </alternativeName>
    <alternativeName>
        <fullName evidence="1">Ketol-acid reductoisomerase type I</fullName>
    </alternativeName>
</protein>